<keyword id="KW-0002">3D-structure</keyword>
<keyword id="KW-0007">Acetylation</keyword>
<keyword id="KW-0025">Alternative splicing</keyword>
<keyword id="KW-0131">Cell cycle</keyword>
<keyword id="KW-0963">Cytoplasm</keyword>
<keyword id="KW-0539">Nucleus</keyword>
<keyword id="KW-0597">Phosphoprotein</keyword>
<keyword id="KW-1267">Proteomics identification</keyword>
<keyword id="KW-1185">Reference proteome</keyword>
<reference key="1">
    <citation type="journal article" date="2000" name="Exp. Cell Res.">
        <title>Cloning and characterization of DIP1, a novel protein that is related to the Id family of proteins.</title>
        <authorList>
            <person name="Yao Y."/>
            <person name="Doki Y."/>
            <person name="Jiang W."/>
            <person name="Imoto M."/>
            <person name="Venkatraj V.S."/>
            <person name="Warburton D."/>
            <person name="Santella R.M."/>
            <person name="Lu B."/>
            <person name="Yan L."/>
            <person name="Sun X.-H."/>
            <person name="Su T."/>
            <person name="Luo J."/>
            <person name="Weinstein I.B."/>
        </authorList>
    </citation>
    <scope>NUCLEOTIDE SEQUENCE [MRNA] (ISOFORM 1)</scope>
    <scope>INTERACTION WITH CCND1</scope>
    <scope>SUBCELLULAR LOCATION</scope>
    <scope>TISSUE SPECIFICITY</scope>
    <scope>DEVELOPMENTAL STAGE</scope>
    <scope>PHOSPHORYLATION</scope>
</reference>
<reference key="2">
    <citation type="journal article" date="2000" name="Hepatology">
        <title>Human homologue of maid: a dominant inhibitory helix-loop-helix protein associated with liver-specific gene expression.</title>
        <authorList>
            <person name="Terai S."/>
            <person name="Aoki H."/>
            <person name="Thorgeirsson S.S."/>
        </authorList>
    </citation>
    <scope>NUCLEOTIDE SEQUENCE [MRNA] (ISOFORM 1)</scope>
    <scope>INTERACTION WITH TCF3</scope>
    <scope>TISSUE SPECIFICITY</scope>
    <source>
        <tissue>Liver</tissue>
    </source>
</reference>
<reference key="3">
    <citation type="journal article" date="2000" name="J. Biol. Chem.">
        <title>GCIP, a novel human grap2 and cyclin D interacting protein, regulates E2F-mediated transcriptional activity.</title>
        <authorList>
            <person name="Xia C."/>
            <person name="Bao Z."/>
            <person name="Tabassam F."/>
            <person name="Ma W."/>
            <person name="Qiu M."/>
            <person name="Hua S."/>
            <person name="Liu M."/>
        </authorList>
    </citation>
    <scope>NUCLEOTIDE SEQUENCE [MRNA] (ISOFORM 1)</scope>
    <scope>FUNCTION</scope>
    <scope>INTERACTION WITH CCND1 AND GRAP2</scope>
    <scope>TISSUE SPECIFICITY</scope>
    <source>
        <tissue>Liver</tissue>
    </source>
</reference>
<reference key="4">
    <citation type="submission" date="2003-07" db="EMBL/GenBank/DDBJ databases">
        <title>Cloning and characterization of a novel human cDNA homologous to murine Maid mRNA.</title>
        <authorList>
            <person name="Gao J."/>
            <person name="Yu L."/>
            <person name="Mao N.H."/>
            <person name="Wan Y.Z."/>
            <person name="Yang Y.M."/>
            <person name="Zhao S.Y."/>
        </authorList>
    </citation>
    <scope>NUCLEOTIDE SEQUENCE [MRNA] (ISOFORM 1)</scope>
</reference>
<reference key="5">
    <citation type="journal article" date="2000" name="Proc. Natl. Acad. Sci. U.S.A.">
        <title>Gene expression profiling in the human hypothalamus-pituitary-adrenal axis and full-length cDNA cloning.</title>
        <authorList>
            <person name="Hu R.-M."/>
            <person name="Han Z.-G."/>
            <person name="Song H.-D."/>
            <person name="Peng Y.-D."/>
            <person name="Huang Q.-H."/>
            <person name="Ren S.-X."/>
            <person name="Gu Y.-J."/>
            <person name="Huang C.-H."/>
            <person name="Li Y.-B."/>
            <person name="Jiang C.-L."/>
            <person name="Fu G."/>
            <person name="Zhang Q.-H."/>
            <person name="Gu B.-W."/>
            <person name="Dai M."/>
            <person name="Mao Y.-F."/>
            <person name="Gao G.-F."/>
            <person name="Rong R."/>
            <person name="Ye M."/>
            <person name="Zhou J."/>
            <person name="Xu S.-H."/>
            <person name="Gu J."/>
            <person name="Shi J.-X."/>
            <person name="Jin W.-R."/>
            <person name="Zhang C.-K."/>
            <person name="Wu T.-M."/>
            <person name="Huang G.-Y."/>
            <person name="Chen Z."/>
            <person name="Chen M.-D."/>
            <person name="Chen J.-L."/>
        </authorList>
    </citation>
    <scope>NUCLEOTIDE SEQUENCE [LARGE SCALE MRNA] (ISOFORM 3)</scope>
    <source>
        <tissue>Hypothalamus</tissue>
    </source>
</reference>
<reference key="6">
    <citation type="submission" date="2004-05" db="EMBL/GenBank/DDBJ databases">
        <title>Cloning of human full open reading frames in Gateway(TM) system entry vector (pDONR201).</title>
        <authorList>
            <person name="Ebert L."/>
            <person name="Schick M."/>
            <person name="Neubert P."/>
            <person name="Schatten R."/>
            <person name="Henze S."/>
            <person name="Korn B."/>
        </authorList>
    </citation>
    <scope>NUCLEOTIDE SEQUENCE [LARGE SCALE MRNA] (ISOFORM 1)</scope>
</reference>
<reference key="7">
    <citation type="journal article" date="2004" name="Nat. Genet.">
        <title>Complete sequencing and characterization of 21,243 full-length human cDNAs.</title>
        <authorList>
            <person name="Ota T."/>
            <person name="Suzuki Y."/>
            <person name="Nishikawa T."/>
            <person name="Otsuki T."/>
            <person name="Sugiyama T."/>
            <person name="Irie R."/>
            <person name="Wakamatsu A."/>
            <person name="Hayashi K."/>
            <person name="Sato H."/>
            <person name="Nagai K."/>
            <person name="Kimura K."/>
            <person name="Makita H."/>
            <person name="Sekine M."/>
            <person name="Obayashi M."/>
            <person name="Nishi T."/>
            <person name="Shibahara T."/>
            <person name="Tanaka T."/>
            <person name="Ishii S."/>
            <person name="Yamamoto J."/>
            <person name="Saito K."/>
            <person name="Kawai Y."/>
            <person name="Isono Y."/>
            <person name="Nakamura Y."/>
            <person name="Nagahari K."/>
            <person name="Murakami K."/>
            <person name="Yasuda T."/>
            <person name="Iwayanagi T."/>
            <person name="Wagatsuma M."/>
            <person name="Shiratori A."/>
            <person name="Sudo H."/>
            <person name="Hosoiri T."/>
            <person name="Kaku Y."/>
            <person name="Kodaira H."/>
            <person name="Kondo H."/>
            <person name="Sugawara M."/>
            <person name="Takahashi M."/>
            <person name="Kanda K."/>
            <person name="Yokoi T."/>
            <person name="Furuya T."/>
            <person name="Kikkawa E."/>
            <person name="Omura Y."/>
            <person name="Abe K."/>
            <person name="Kamihara K."/>
            <person name="Katsuta N."/>
            <person name="Sato K."/>
            <person name="Tanikawa M."/>
            <person name="Yamazaki M."/>
            <person name="Ninomiya K."/>
            <person name="Ishibashi T."/>
            <person name="Yamashita H."/>
            <person name="Murakawa K."/>
            <person name="Fujimori K."/>
            <person name="Tanai H."/>
            <person name="Kimata M."/>
            <person name="Watanabe M."/>
            <person name="Hiraoka S."/>
            <person name="Chiba Y."/>
            <person name="Ishida S."/>
            <person name="Ono Y."/>
            <person name="Takiguchi S."/>
            <person name="Watanabe S."/>
            <person name="Yosida M."/>
            <person name="Hotuta T."/>
            <person name="Kusano J."/>
            <person name="Kanehori K."/>
            <person name="Takahashi-Fujii A."/>
            <person name="Hara H."/>
            <person name="Tanase T.-O."/>
            <person name="Nomura Y."/>
            <person name="Togiya S."/>
            <person name="Komai F."/>
            <person name="Hara R."/>
            <person name="Takeuchi K."/>
            <person name="Arita M."/>
            <person name="Imose N."/>
            <person name="Musashino K."/>
            <person name="Yuuki H."/>
            <person name="Oshima A."/>
            <person name="Sasaki N."/>
            <person name="Aotsuka S."/>
            <person name="Yoshikawa Y."/>
            <person name="Matsunawa H."/>
            <person name="Ichihara T."/>
            <person name="Shiohata N."/>
            <person name="Sano S."/>
            <person name="Moriya S."/>
            <person name="Momiyama H."/>
            <person name="Satoh N."/>
            <person name="Takami S."/>
            <person name="Terashima Y."/>
            <person name="Suzuki O."/>
            <person name="Nakagawa S."/>
            <person name="Senoh A."/>
            <person name="Mizoguchi H."/>
            <person name="Goto Y."/>
            <person name="Shimizu F."/>
            <person name="Wakebe H."/>
            <person name="Hishigaki H."/>
            <person name="Watanabe T."/>
            <person name="Sugiyama A."/>
            <person name="Takemoto M."/>
            <person name="Kawakami B."/>
            <person name="Yamazaki M."/>
            <person name="Watanabe K."/>
            <person name="Kumagai A."/>
            <person name="Itakura S."/>
            <person name="Fukuzumi Y."/>
            <person name="Fujimori Y."/>
            <person name="Komiyama M."/>
            <person name="Tashiro H."/>
            <person name="Tanigami A."/>
            <person name="Fujiwara T."/>
            <person name="Ono T."/>
            <person name="Yamada K."/>
            <person name="Fujii Y."/>
            <person name="Ozaki K."/>
            <person name="Hirao M."/>
            <person name="Ohmori Y."/>
            <person name="Kawabata A."/>
            <person name="Hikiji T."/>
            <person name="Kobatake N."/>
            <person name="Inagaki H."/>
            <person name="Ikema Y."/>
            <person name="Okamoto S."/>
            <person name="Okitani R."/>
            <person name="Kawakami T."/>
            <person name="Noguchi S."/>
            <person name="Itoh T."/>
            <person name="Shigeta K."/>
            <person name="Senba T."/>
            <person name="Matsumura K."/>
            <person name="Nakajima Y."/>
            <person name="Mizuno T."/>
            <person name="Morinaga M."/>
            <person name="Sasaki M."/>
            <person name="Togashi T."/>
            <person name="Oyama M."/>
            <person name="Hata H."/>
            <person name="Watanabe M."/>
            <person name="Komatsu T."/>
            <person name="Mizushima-Sugano J."/>
            <person name="Satoh T."/>
            <person name="Shirai Y."/>
            <person name="Takahashi Y."/>
            <person name="Nakagawa K."/>
            <person name="Okumura K."/>
            <person name="Nagase T."/>
            <person name="Nomura N."/>
            <person name="Kikuchi H."/>
            <person name="Masuho Y."/>
            <person name="Yamashita R."/>
            <person name="Nakai K."/>
            <person name="Yada T."/>
            <person name="Nakamura Y."/>
            <person name="Ohara O."/>
            <person name="Isogai T."/>
            <person name="Sugano S."/>
        </authorList>
    </citation>
    <scope>NUCLEOTIDE SEQUENCE [LARGE SCALE MRNA] (ISOFORMS 1; 3 AND 4)</scope>
    <source>
        <tissue>Hair follicle dermal papilla</tissue>
        <tissue>Lung</tissue>
        <tissue>Retinoblastoma</tissue>
        <tissue>Trachea</tissue>
    </source>
</reference>
<reference key="8">
    <citation type="journal article" date="2005" name="DNA Res.">
        <title>Signal sequence and keyword trap in silico for selection of full-length human cDNAs encoding secretion or membrane proteins from oligo-capped cDNA libraries.</title>
        <authorList>
            <person name="Otsuki T."/>
            <person name="Ota T."/>
            <person name="Nishikawa T."/>
            <person name="Hayashi K."/>
            <person name="Suzuki Y."/>
            <person name="Yamamoto J."/>
            <person name="Wakamatsu A."/>
            <person name="Kimura K."/>
            <person name="Sakamoto K."/>
            <person name="Hatano N."/>
            <person name="Kawai Y."/>
            <person name="Ishii S."/>
            <person name="Saito K."/>
            <person name="Kojima S."/>
            <person name="Sugiyama T."/>
            <person name="Ono T."/>
            <person name="Okano K."/>
            <person name="Yoshikawa Y."/>
            <person name="Aotsuka S."/>
            <person name="Sasaki N."/>
            <person name="Hattori A."/>
            <person name="Okumura K."/>
            <person name="Nagai K."/>
            <person name="Sugano S."/>
            <person name="Isogai T."/>
        </authorList>
    </citation>
    <scope>NUCLEOTIDE SEQUENCE [LARGE SCALE MRNA] (ISOFORM 2)</scope>
    <source>
        <tissue>Placenta</tissue>
    </source>
</reference>
<reference key="9">
    <citation type="submission" date="2005-07" db="EMBL/GenBank/DDBJ databases">
        <authorList>
            <person name="Mural R.J."/>
            <person name="Istrail S."/>
            <person name="Sutton G.G."/>
            <person name="Florea L."/>
            <person name="Halpern A.L."/>
            <person name="Mobarry C.M."/>
            <person name="Lippert R."/>
            <person name="Walenz B."/>
            <person name="Shatkay H."/>
            <person name="Dew I."/>
            <person name="Miller J.R."/>
            <person name="Flanigan M.J."/>
            <person name="Edwards N.J."/>
            <person name="Bolanos R."/>
            <person name="Fasulo D."/>
            <person name="Halldorsson B.V."/>
            <person name="Hannenhalli S."/>
            <person name="Turner R."/>
            <person name="Yooseph S."/>
            <person name="Lu F."/>
            <person name="Nusskern D.R."/>
            <person name="Shue B.C."/>
            <person name="Zheng X.H."/>
            <person name="Zhong F."/>
            <person name="Delcher A.L."/>
            <person name="Huson D.H."/>
            <person name="Kravitz S.A."/>
            <person name="Mouchard L."/>
            <person name="Reinert K."/>
            <person name="Remington K.A."/>
            <person name="Clark A.G."/>
            <person name="Waterman M.S."/>
            <person name="Eichler E.E."/>
            <person name="Adams M.D."/>
            <person name="Hunkapiller M.W."/>
            <person name="Myers E.W."/>
            <person name="Venter J.C."/>
        </authorList>
    </citation>
    <scope>NUCLEOTIDE SEQUENCE [LARGE SCALE GENOMIC DNA]</scope>
</reference>
<reference key="10">
    <citation type="journal article" date="2004" name="Genome Res.">
        <title>The status, quality, and expansion of the NIH full-length cDNA project: the Mammalian Gene Collection (MGC).</title>
        <authorList>
            <consortium name="The MGC Project Team"/>
        </authorList>
    </citation>
    <scope>NUCLEOTIDE SEQUENCE [LARGE SCALE MRNA] (ISOFORM 1)</scope>
    <source>
        <tissue>Pancreas</tissue>
    </source>
</reference>
<reference key="11">
    <citation type="journal article" date="2000" name="Biochem. Biophys. Res. Commun.">
        <title>p29, a novel GCIP-interacting protein, localizes in the nucleus.</title>
        <authorList>
            <person name="Chang M.-S."/>
            <person name="Chang C.-L."/>
            <person name="Huang C.-J."/>
            <person name="Yang Y.-C."/>
        </authorList>
    </citation>
    <scope>INTERACTION WITH SYF2</scope>
</reference>
<reference key="12">
    <citation type="journal article" date="2005" name="Gastroenterology">
        <title>Human homologue of maid is a useful marker protein in hepatocarcinogenesis.</title>
        <authorList>
            <person name="Takami T."/>
            <person name="Terai S."/>
            <person name="Yokoyama Y."/>
            <person name="Tanimoto H."/>
            <person name="Tajima K."/>
            <person name="Uchida K."/>
            <person name="Yamasaki T."/>
            <person name="Sakaida I."/>
            <person name="Nishina H."/>
            <person name="Thorgeirsson S.S."/>
            <person name="Okita K."/>
        </authorList>
    </citation>
    <scope>TISSUE SPECIFICITY</scope>
    <scope>INTERACTION WITH COPS5</scope>
</reference>
<reference key="13">
    <citation type="journal article" date="2007" name="J. Cell. Biochem.">
        <title>GCIP/CCNDBP1, a helix-loop-helix protein, suppresses tumorigenesis.</title>
        <authorList>
            <person name="Ma W."/>
            <person name="Stafford L.J."/>
            <person name="Li D."/>
            <person name="Luo J."/>
            <person name="Li X."/>
            <person name="Ning G."/>
            <person name="Liu M."/>
        </authorList>
    </citation>
    <scope>INTERACTION WITH SIRT6</scope>
    <scope>SUBCELLULAR LOCATION</scope>
    <scope>TISSUE SPECIFICITY</scope>
    <scope>INDUCTION</scope>
</reference>
<reference key="14">
    <citation type="journal article" date="2008" name="Oncogene">
        <title>Ribosomal phosphoprotein P0 interacts with GCIP and overexpression of P0 is associated with cellular proliferation in breast and liver carcinoma cells.</title>
        <authorList>
            <person name="Chang T.-W."/>
            <person name="Chen C.-C."/>
            <person name="Chen K.-Y."/>
            <person name="Su J.-H."/>
            <person name="Chang J.-H."/>
            <person name="Chang M.-C."/>
        </authorList>
    </citation>
    <scope>INTERACTION WITH RPLP0</scope>
    <scope>SUBCELLULAR LOCATION</scope>
</reference>
<reference key="15">
    <citation type="journal article" date="2012" name="Proc. Natl. Acad. Sci. U.S.A.">
        <title>N-terminal acetylome analyses and functional insights of the N-terminal acetyltransferase NatB.</title>
        <authorList>
            <person name="Van Damme P."/>
            <person name="Lasa M."/>
            <person name="Polevoda B."/>
            <person name="Gazquez C."/>
            <person name="Elosegui-Artola A."/>
            <person name="Kim D.S."/>
            <person name="De Juan-Pardo E."/>
            <person name="Demeyer K."/>
            <person name="Hole K."/>
            <person name="Larrea E."/>
            <person name="Timmerman E."/>
            <person name="Prieto J."/>
            <person name="Arnesen T."/>
            <person name="Sherman F."/>
            <person name="Gevaert K."/>
            <person name="Aldabe R."/>
        </authorList>
    </citation>
    <scope>ACETYLATION [LARGE SCALE ANALYSIS] AT ALA-2</scope>
    <scope>CLEAVAGE OF INITIATOR METHIONINE [LARGE SCALE ANALYSIS]</scope>
    <scope>IDENTIFICATION BY MASS SPECTROMETRY [LARGE SCALE ANALYSIS]</scope>
</reference>
<feature type="initiator methionine" description="Removed" evidence="12">
    <location>
        <position position="1"/>
    </location>
</feature>
<feature type="chain" id="PRO_0000323372" description="Cyclin-D1-binding protein 1">
    <location>
        <begin position="2"/>
        <end position="360"/>
    </location>
</feature>
<feature type="region of interest" description="Required for interaction with CCND1">
    <location>
        <begin position="2"/>
        <end position="208"/>
    </location>
</feature>
<feature type="region of interest" description="Interaction with RPLP0" evidence="7">
    <location>
        <begin position="2"/>
        <end position="190"/>
    </location>
</feature>
<feature type="region of interest" description="Interaction with TCF3" evidence="3">
    <location>
        <begin position="2"/>
        <end position="184"/>
    </location>
</feature>
<feature type="region of interest" description="Interaction with TCF3" evidence="3">
    <location>
        <begin position="150"/>
        <end position="360"/>
    </location>
</feature>
<feature type="region of interest" description="Interaction with RPLP0" evidence="7">
    <location>
        <begin position="240"/>
        <end position="360"/>
    </location>
</feature>
<feature type="modified residue" description="N-acetylalanine" evidence="12">
    <location>
        <position position="2"/>
    </location>
</feature>
<feature type="splice variant" id="VSP_032012" description="In isoform 3 and isoform 4." evidence="8 9">
    <location>
        <begin position="1"/>
        <end position="128"/>
    </location>
</feature>
<feature type="splice variant" id="VSP_032013" description="In isoform 4." evidence="9">
    <original>SAKLVSVLKKALEITKASHVTPQPED</original>
    <variation>VSTGFEGIATEQMGRISLITSISCK</variation>
    <location>
        <begin position="308"/>
        <end position="333"/>
    </location>
</feature>
<feature type="splice variant" id="VSP_032014" description="In isoform 2." evidence="10">
    <original>SA</original>
    <variation>EP</variation>
    <location>
        <begin position="308"/>
        <end position="309"/>
    </location>
</feature>
<feature type="splice variant" id="VSP_032015" description="In isoform 2." evidence="10">
    <location>
        <begin position="310"/>
        <end position="360"/>
    </location>
</feature>
<feature type="splice variant" id="VSP_032016" description="In isoform 4." evidence="9">
    <location>
        <begin position="334"/>
        <end position="360"/>
    </location>
</feature>
<feature type="sequence conflict" description="In Ref. 1; AAD11777." evidence="11" ref="1">
    <original>A</original>
    <variation>D</variation>
    <location>
        <position position="40"/>
    </location>
</feature>
<feature type="sequence conflict" description="In Ref. 4; AAP97163." evidence="11" ref="4">
    <original>Q</original>
    <variation>R</variation>
    <location>
        <position position="41"/>
    </location>
</feature>
<feature type="sequence conflict" description="In Ref. 8; BAC11433." evidence="11" ref="8">
    <original>F</original>
    <variation>S</variation>
    <location>
        <position position="74"/>
    </location>
</feature>
<feature type="sequence conflict" description="In Ref. 8; BAC11433." evidence="11" ref="8">
    <original>N</original>
    <variation>S</variation>
    <location>
        <position position="211"/>
    </location>
</feature>
<feature type="sequence conflict" description="In Ref. 7; BAF83396." evidence="11" ref="7">
    <original>E</original>
    <variation>G</variation>
    <location>
        <position position="235"/>
    </location>
</feature>
<feature type="sequence conflict" description="In Ref. 7; BAC87645." evidence="11" ref="7">
    <original>K</original>
    <variation>R</variation>
    <location>
        <position position="267"/>
    </location>
</feature>
<feature type="sequence conflict" description="In Ref. 1; AAD11777 and 3; AAF67182." evidence="11" ref="1 3">
    <original>L</original>
    <variation>M</variation>
    <location>
        <position position="274"/>
    </location>
</feature>
<feature type="sequence conflict" description="In Ref. 7; BAC11530." evidence="11" ref="7">
    <original>K</original>
    <variation>R</variation>
    <location>
        <position position="310"/>
    </location>
</feature>
<feature type="sequence conflict" description="In Ref. 7; BAF83354." evidence="11" ref="7">
    <original>S</original>
    <variation>I</variation>
    <location>
        <position position="334"/>
    </location>
</feature>
<feature type="helix" evidence="13">
    <location>
        <begin position="17"/>
        <end position="29"/>
    </location>
</feature>
<feature type="helix" evidence="13">
    <location>
        <begin position="31"/>
        <end position="36"/>
    </location>
</feature>
<feature type="helix" evidence="13">
    <location>
        <begin position="49"/>
        <end position="73"/>
    </location>
</feature>
<feature type="strand" evidence="13">
    <location>
        <begin position="76"/>
        <end position="78"/>
    </location>
</feature>
<feature type="helix" evidence="13">
    <location>
        <begin position="82"/>
        <end position="103"/>
    </location>
</feature>
<feature type="helix" evidence="13">
    <location>
        <begin position="108"/>
        <end position="110"/>
    </location>
</feature>
<feature type="helix" evidence="13">
    <location>
        <begin position="112"/>
        <end position="137"/>
    </location>
</feature>
<feature type="helix" evidence="13">
    <location>
        <begin position="154"/>
        <end position="160"/>
    </location>
</feature>
<feature type="turn" evidence="13">
    <location>
        <begin position="161"/>
        <end position="164"/>
    </location>
</feature>
<feature type="helix" evidence="13">
    <location>
        <begin position="169"/>
        <end position="197"/>
    </location>
</feature>
<feature type="helix" evidence="13">
    <location>
        <begin position="235"/>
        <end position="265"/>
    </location>
</feature>
<feature type="helix" evidence="13">
    <location>
        <begin position="271"/>
        <end position="295"/>
    </location>
</feature>
<feature type="strand" evidence="13">
    <location>
        <begin position="296"/>
        <end position="298"/>
    </location>
</feature>
<feature type="helix" evidence="13">
    <location>
        <begin position="301"/>
        <end position="324"/>
    </location>
</feature>
<feature type="helix" evidence="13">
    <location>
        <begin position="335"/>
        <end position="352"/>
    </location>
</feature>
<feature type="helix" evidence="13">
    <location>
        <begin position="353"/>
        <end position="358"/>
    </location>
</feature>
<comment type="function">
    <text evidence="1">May negatively regulate cell cycle progression. May act at least in part via inhibition of the cyclin-D1/CDK4 complex, thereby preventing phosphorylation of RB1 and blocking E2F-dependent transcription.</text>
</comment>
<comment type="subunit">
    <text evidence="1 2 3 4 5 6 7">Interacts with CCND1 and GRAP2. May also interact with COPS5, RPLP0, SIRT6, SYF2 and TCF3.</text>
</comment>
<comment type="interaction">
    <interactant intactId="EBI-748961">
        <id>O95273</id>
    </interactant>
    <interactant intactId="EBI-12227349">
        <id>Q96PE1-2</id>
        <label>ADGRA2</label>
    </interactant>
    <organismsDiffer>false</organismsDiffer>
    <experiments>3</experiments>
</comment>
<comment type="interaction">
    <interactant intactId="EBI-748961">
        <id>O95273</id>
    </interactant>
    <interactant intactId="EBI-8796759">
        <id>Q01433</id>
        <label>AMPD2</label>
    </interactant>
    <organismsDiffer>false</organismsDiffer>
    <experiments>4</experiments>
</comment>
<comment type="interaction">
    <interactant intactId="EBI-748961">
        <id>O95273</id>
    </interactant>
    <interactant intactId="EBI-745213">
        <id>P29972</id>
        <label>AQP1</label>
    </interactant>
    <organismsDiffer>false</organismsDiffer>
    <experiments>3</experiments>
</comment>
<comment type="interaction">
    <interactant intactId="EBI-748961">
        <id>O95273</id>
    </interactant>
    <interactant intactId="EBI-3866859">
        <id>Q7Z5H3</id>
        <label>ARHGAP22</label>
    </interactant>
    <organismsDiffer>false</organismsDiffer>
    <experiments>3</experiments>
</comment>
<comment type="interaction">
    <interactant intactId="EBI-748961">
        <id>O95273</id>
    </interactant>
    <interactant intactId="EBI-3904463">
        <id>P51164</id>
        <label>ATP4B</label>
    </interactant>
    <organismsDiffer>false</organismsDiffer>
    <experiments>3</experiments>
</comment>
<comment type="interaction">
    <interactant intactId="EBI-748961">
        <id>O95273</id>
    </interactant>
    <interactant intactId="EBI-10303102">
        <id>Q9BZE7</id>
        <label>C22orf23</label>
    </interactant>
    <organismsDiffer>false</organismsDiffer>
    <experiments>5</experiments>
</comment>
<comment type="interaction">
    <interactant intactId="EBI-748961">
        <id>O95273</id>
    </interactant>
    <interactant intactId="EBI-10244057">
        <id>Q5I0X4</id>
        <label>C6orf226</label>
    </interactant>
    <organismsDiffer>false</organismsDiffer>
    <experiments>4</experiments>
</comment>
<comment type="interaction">
    <interactant intactId="EBI-748961">
        <id>O95273</id>
    </interactant>
    <interactant intactId="EBI-10749669">
        <id>Q8IYE0</id>
        <label>CCDC146</label>
    </interactant>
    <organismsDiffer>false</organismsDiffer>
    <experiments>3</experiments>
</comment>
<comment type="interaction">
    <interactant intactId="EBI-748961">
        <id>O95273</id>
    </interactant>
    <interactant intactId="EBI-10247802">
        <id>Q8IYE0-2</id>
        <label>CCDC146</label>
    </interactant>
    <organismsDiffer>false</organismsDiffer>
    <experiments>3</experiments>
</comment>
<comment type="interaction">
    <interactant intactId="EBI-748961">
        <id>O95273</id>
    </interactant>
    <interactant intactId="EBI-746238">
        <id>Q07002</id>
        <label>CDK18</label>
    </interactant>
    <organismsDiffer>false</organismsDiffer>
    <experiments>3</experiments>
</comment>
<comment type="interaction">
    <interactant intactId="EBI-748961">
        <id>O95273</id>
    </interactant>
    <interactant intactId="EBI-10255250">
        <id>Q6ZU64-3</id>
        <label>CFAP65</label>
    </interactant>
    <organismsDiffer>false</organismsDiffer>
    <experiments>3</experiments>
</comment>
<comment type="interaction">
    <interactant intactId="EBI-748961">
        <id>O95273</id>
    </interactant>
    <interactant intactId="EBI-741032">
        <id>Q8NE01</id>
        <label>CNNM3</label>
    </interactant>
    <organismsDiffer>false</organismsDiffer>
    <experiments>3</experiments>
</comment>
<comment type="interaction">
    <interactant intactId="EBI-748961">
        <id>O95273</id>
    </interactant>
    <interactant intactId="EBI-594661">
        <id>Q92905</id>
        <label>COPS5</label>
    </interactant>
    <organismsDiffer>false</organismsDiffer>
    <experiments>5</experiments>
</comment>
<comment type="interaction">
    <interactant intactId="EBI-748961">
        <id>O95273</id>
    </interactant>
    <interactant intactId="EBI-1057139">
        <id>Q93034</id>
        <label>CUL5</label>
    </interactant>
    <organismsDiffer>false</organismsDiffer>
    <experiments>4</experiments>
</comment>
<comment type="interaction">
    <interactant intactId="EBI-748961">
        <id>O95273</id>
    </interactant>
    <interactant intactId="EBI-9679045">
        <id>Q9NQL9</id>
        <label>DMRT3</label>
    </interactant>
    <organismsDiffer>false</organismsDiffer>
    <experiments>3</experiments>
</comment>
<comment type="interaction">
    <interactant intactId="EBI-748961">
        <id>O95273</id>
    </interactant>
    <interactant intactId="EBI-448771">
        <id>Q92608</id>
        <label>DOCK2</label>
    </interactant>
    <organismsDiffer>false</organismsDiffer>
    <experiments>3</experiments>
</comment>
<comment type="interaction">
    <interactant intactId="EBI-748961">
        <id>O95273</id>
    </interactant>
    <interactant intactId="EBI-12259414">
        <id>Q92731-3</id>
        <label>ESR2</label>
    </interactant>
    <organismsDiffer>false</organismsDiffer>
    <experiments>3</experiments>
</comment>
<comment type="interaction">
    <interactant intactId="EBI-748961">
        <id>O95273</id>
    </interactant>
    <interactant intactId="EBI-1752811">
        <id>Q9BQ89</id>
        <label>FAM110A</label>
    </interactant>
    <organismsDiffer>false</organismsDiffer>
    <experiments>3</experiments>
</comment>
<comment type="interaction">
    <interactant intactId="EBI-748961">
        <id>O95273</id>
    </interactant>
    <interactant intactId="EBI-16428876">
        <id>A0A0S2Z6M9</id>
        <label>FAM126A</label>
    </interactant>
    <organismsDiffer>false</organismsDiffer>
    <experiments>3</experiments>
</comment>
<comment type="interaction">
    <interactant intactId="EBI-748961">
        <id>O95273</id>
    </interactant>
    <interactant intactId="EBI-719941">
        <id>Q3B820</id>
        <label>FAM161A</label>
    </interactant>
    <organismsDiffer>false</organismsDiffer>
    <experiments>5</experiments>
</comment>
<comment type="interaction">
    <interactant intactId="EBI-748961">
        <id>O95273</id>
    </interactant>
    <interactant intactId="EBI-16428900">
        <id>A0A0S2Z408</id>
        <label>FH</label>
    </interactant>
    <organismsDiffer>false</organismsDiffer>
    <experiments>3</experiments>
</comment>
<comment type="interaction">
    <interactant intactId="EBI-748961">
        <id>O95273</id>
    </interactant>
    <interactant intactId="EBI-8803802">
        <id>Q9ULW2</id>
        <label>FZD10</label>
    </interactant>
    <organismsDiffer>false</organismsDiffer>
    <experiments>3</experiments>
</comment>
<comment type="interaction">
    <interactant intactId="EBI-748961">
        <id>O95273</id>
    </interactant>
    <interactant intactId="EBI-7960826">
        <id>Q8NHY3</id>
        <label>GAS2L2</label>
    </interactant>
    <organismsDiffer>false</organismsDiffer>
    <experiments>3</experiments>
</comment>
<comment type="interaction">
    <interactant intactId="EBI-748961">
        <id>O95273</id>
    </interactant>
    <interactant intactId="EBI-1053767">
        <id>Q9Y2Q3</id>
        <label>GSTK1</label>
    </interactant>
    <organismsDiffer>false</organismsDiffer>
    <experiments>3</experiments>
</comment>
<comment type="interaction">
    <interactant intactId="EBI-748961">
        <id>O95273</id>
    </interactant>
    <interactant intactId="EBI-719843">
        <id>P02008</id>
        <label>HBZ</label>
    </interactant>
    <organismsDiffer>false</organismsDiffer>
    <experiments>3</experiments>
</comment>
<comment type="interaction">
    <interactant intactId="EBI-748961">
        <id>O95273</id>
    </interactant>
    <interactant intactId="EBI-11953488">
        <id>P56524-2</id>
        <label>HDAC4</label>
    </interactant>
    <organismsDiffer>false</organismsDiffer>
    <experiments>3</experiments>
</comment>
<comment type="interaction">
    <interactant intactId="EBI-748961">
        <id>O95273</id>
    </interactant>
    <interactant intactId="EBI-389432">
        <id>P09429</id>
        <label>HMGB1</label>
    </interactant>
    <organismsDiffer>false</organismsDiffer>
    <experiments>3</experiments>
</comment>
<comment type="interaction">
    <interactant intactId="EBI-748961">
        <id>O95273</id>
    </interactant>
    <interactant intactId="EBI-11065686">
        <id>Q9BYI3</id>
        <label>HYCC1</label>
    </interactant>
    <organismsDiffer>false</organismsDiffer>
    <experiments>3</experiments>
</comment>
<comment type="interaction">
    <interactant intactId="EBI-748961">
        <id>O95273</id>
    </interactant>
    <interactant intactId="EBI-713450">
        <id>Q02363</id>
        <label>ID2</label>
    </interactant>
    <organismsDiffer>false</organismsDiffer>
    <experiments>4</experiments>
</comment>
<comment type="interaction">
    <interactant intactId="EBI-748961">
        <id>O95273</id>
    </interactant>
    <interactant intactId="EBI-747481">
        <id>Q9NV31</id>
        <label>IMP3</label>
    </interactant>
    <organismsDiffer>false</organismsDiffer>
    <experiments>6</experiments>
</comment>
<comment type="interaction">
    <interactant intactId="EBI-748961">
        <id>O95273</id>
    </interactant>
    <interactant intactId="EBI-12021374">
        <id>Q6NXR0</id>
        <label>IRGC</label>
    </interactant>
    <organismsDiffer>false</organismsDiffer>
    <experiments>3</experiments>
</comment>
<comment type="interaction">
    <interactant intactId="EBI-748961">
        <id>O95273</id>
    </interactant>
    <interactant intactId="EBI-748884">
        <id>Q96GY3</id>
        <label>LIN37</label>
    </interactant>
    <organismsDiffer>false</organismsDiffer>
    <experiments>3</experiments>
</comment>
<comment type="interaction">
    <interactant intactId="EBI-748961">
        <id>O95273</id>
    </interactant>
    <interactant intactId="EBI-739832">
        <id>Q8TBB1</id>
        <label>LNX1</label>
    </interactant>
    <organismsDiffer>false</organismsDiffer>
    <experiments>3</experiments>
</comment>
<comment type="interaction">
    <interactant intactId="EBI-748961">
        <id>O95273</id>
    </interactant>
    <interactant intactId="EBI-1056930">
        <id>P36507</id>
        <label>MAP2K2</label>
    </interactant>
    <organismsDiffer>false</organismsDiffer>
    <experiments>3</experiments>
</comment>
<comment type="interaction">
    <interactant intactId="EBI-748961">
        <id>O95273</id>
    </interactant>
    <interactant intactId="EBI-14086479">
        <id>Q8IVT4</id>
        <label>MGC50722</label>
    </interactant>
    <organismsDiffer>false</organismsDiffer>
    <experiments>3</experiments>
</comment>
<comment type="interaction">
    <interactant intactId="EBI-748961">
        <id>O95273</id>
    </interactant>
    <interactant intactId="EBI-1757866">
        <id>P00540</id>
        <label>MOS</label>
    </interactant>
    <organismsDiffer>false</organismsDiffer>
    <experiments>3</experiments>
</comment>
<comment type="interaction">
    <interactant intactId="EBI-748961">
        <id>O95273</id>
    </interactant>
    <interactant intactId="EBI-2371967">
        <id>Q9P015</id>
        <label>MRPL15</label>
    </interactant>
    <organismsDiffer>false</organismsDiffer>
    <experiments>7</experiments>
</comment>
<comment type="interaction">
    <interactant intactId="EBI-748961">
        <id>O95273</id>
    </interactant>
    <interactant intactId="EBI-10249231">
        <id>Q69YI7</id>
        <label>NAIF1</label>
    </interactant>
    <organismsDiffer>false</organismsDiffer>
    <experiments>3</experiments>
</comment>
<comment type="interaction">
    <interactant intactId="EBI-748961">
        <id>O95273</id>
    </interactant>
    <interactant intactId="EBI-10216569">
        <id>P60321</id>
        <label>NANOS2</label>
    </interactant>
    <organismsDiffer>false</organismsDiffer>
    <experiments>5</experiments>
</comment>
<comment type="interaction">
    <interactant intactId="EBI-748961">
        <id>O95273</id>
    </interactant>
    <interactant intactId="EBI-2862609">
        <id>Q9UMY1</id>
        <label>NOL7</label>
    </interactant>
    <organismsDiffer>false</organismsDiffer>
    <experiments>3</experiments>
</comment>
<comment type="interaction">
    <interactant intactId="EBI-748961">
        <id>O95273</id>
    </interactant>
    <interactant intactId="EBI-12028784">
        <id>Q6X4W1-2</id>
        <label>NSMF</label>
    </interactant>
    <organismsDiffer>false</organismsDiffer>
    <experiments>3</experiments>
</comment>
<comment type="interaction">
    <interactant intactId="EBI-748961">
        <id>O95273</id>
    </interactant>
    <interactant intactId="EBI-348555">
        <id>O75928</id>
        <label>PIAS2</label>
    </interactant>
    <organismsDiffer>false</organismsDiffer>
    <experiments>4</experiments>
</comment>
<comment type="interaction">
    <interactant intactId="EBI-748961">
        <id>O95273</id>
    </interactant>
    <interactant intactId="EBI-2568609">
        <id>Q9BSJ6</id>
        <label>PIMREG</label>
    </interactant>
    <organismsDiffer>false</organismsDiffer>
    <experiments>6</experiments>
</comment>
<comment type="interaction">
    <interactant intactId="EBI-748961">
        <id>O95273</id>
    </interactant>
    <interactant intactId="EBI-12069346">
        <id>Q6IQ23-2</id>
        <label>PLEKHA7</label>
    </interactant>
    <organismsDiffer>false</organismsDiffer>
    <experiments>3</experiments>
</comment>
<comment type="interaction">
    <interactant intactId="EBI-748961">
        <id>O95273</id>
    </interactant>
    <interactant intactId="EBI-10193858">
        <id>P02689</id>
        <label>PMP2</label>
    </interactant>
    <organismsDiffer>false</organismsDiffer>
    <experiments>4</experiments>
</comment>
<comment type="interaction">
    <interactant intactId="EBI-748961">
        <id>O95273</id>
    </interactant>
    <interactant intactId="EBI-10276663">
        <id>Q8WUT1</id>
        <label>POLDIP3</label>
    </interactant>
    <organismsDiffer>false</organismsDiffer>
    <experiments>3</experiments>
</comment>
<comment type="interaction">
    <interactant intactId="EBI-748961">
        <id>O95273</id>
    </interactant>
    <interactant intactId="EBI-10320765">
        <id>Q9UGP5-2</id>
        <label>POLL</label>
    </interactant>
    <organismsDiffer>false</organismsDiffer>
    <experiments>3</experiments>
</comment>
<comment type="interaction">
    <interactant intactId="EBI-748961">
        <id>O95273</id>
    </interactant>
    <interactant intactId="EBI-1567797">
        <id>Q8WWY3</id>
        <label>PRPF31</label>
    </interactant>
    <organismsDiffer>false</organismsDiffer>
    <experiments>5</experiments>
</comment>
<comment type="interaction">
    <interactant intactId="EBI-748961">
        <id>O95273</id>
    </interactant>
    <interactant intactId="EBI-603329">
        <id>P40306</id>
        <label>PSMB10</label>
    </interactant>
    <organismsDiffer>false</organismsDiffer>
    <experiments>5</experiments>
</comment>
<comment type="interaction">
    <interactant intactId="EBI-748961">
        <id>O95273</id>
    </interactant>
    <interactant intactId="EBI-413374">
        <id>P10276</id>
        <label>RARA</label>
    </interactant>
    <organismsDiffer>false</organismsDiffer>
    <experiments>3</experiments>
</comment>
<comment type="interaction">
    <interactant intactId="EBI-748961">
        <id>O95273</id>
    </interactant>
    <interactant intactId="EBI-8583223">
        <id>P10826-2</id>
        <label>RARB</label>
    </interactant>
    <organismsDiffer>false</organismsDiffer>
    <experiments>3</experiments>
</comment>
<comment type="interaction">
    <interactant intactId="EBI-748961">
        <id>O95273</id>
    </interactant>
    <interactant intactId="EBI-3941274">
        <id>P82980</id>
        <label>RBP5</label>
    </interactant>
    <organismsDiffer>false</organismsDiffer>
    <experiments>3</experiments>
</comment>
<comment type="interaction">
    <interactant intactId="EBI-748961">
        <id>O95273</id>
    </interactant>
    <interactant intactId="EBI-366357">
        <id>P46779</id>
        <label>RPL28</label>
    </interactant>
    <organismsDiffer>false</organismsDiffer>
    <experiments>7</experiments>
</comment>
<comment type="interaction">
    <interactant intactId="EBI-748961">
        <id>O95273</id>
    </interactant>
    <interactant intactId="EBI-6658607">
        <id>Q96EH5</id>
        <label>RPL39L</label>
    </interactant>
    <organismsDiffer>false</organismsDiffer>
    <experiments>4</experiments>
</comment>
<comment type="interaction">
    <interactant intactId="EBI-748961">
        <id>O95273</id>
    </interactant>
    <interactant intactId="EBI-1052408">
        <id>Q6DKI1</id>
        <label>RPL7L1</label>
    </interactant>
    <organismsDiffer>false</organismsDiffer>
    <experiments>3</experiments>
</comment>
<comment type="interaction">
    <interactant intactId="EBI-748961">
        <id>O95273</id>
    </interactant>
    <interactant intactId="EBI-354101">
        <id>P05388</id>
        <label>RPLP0</label>
    </interactant>
    <organismsDiffer>false</organismsDiffer>
    <experiments>7</experiments>
</comment>
<comment type="interaction">
    <interactant intactId="EBI-748961">
        <id>O95273</id>
    </interactant>
    <interactant intactId="EBI-353027">
        <id>P62857</id>
        <label>RPS28</label>
    </interactant>
    <organismsDiffer>false</organismsDiffer>
    <experiments>3</experiments>
</comment>
<comment type="interaction">
    <interactant intactId="EBI-748961">
        <id>O95273</id>
    </interactant>
    <interactant intactId="EBI-3911502">
        <id>P55042</id>
        <label>RRAD</label>
    </interactant>
    <organismsDiffer>false</organismsDiffer>
    <experiments>5</experiments>
</comment>
<comment type="interaction">
    <interactant intactId="EBI-748961">
        <id>O95273</id>
    </interactant>
    <interactant intactId="EBI-11955083">
        <id>Q9NUL5-4</id>
        <label>SHFL</label>
    </interactant>
    <organismsDiffer>false</organismsDiffer>
    <experiments>3</experiments>
</comment>
<comment type="interaction">
    <interactant intactId="EBI-748961">
        <id>O95273</id>
    </interactant>
    <interactant intactId="EBI-12243266">
        <id>Q7RTY0</id>
        <label>SLC16A13</label>
    </interactant>
    <organismsDiffer>false</organismsDiffer>
    <experiments>3</experiments>
</comment>
<comment type="interaction">
    <interactant intactId="EBI-748961">
        <id>O95273</id>
    </interactant>
    <interactant intactId="EBI-717201">
        <id>Q9UQ90</id>
        <label>SPG7</label>
    </interactant>
    <organismsDiffer>false</organismsDiffer>
    <experiments>3</experiments>
</comment>
<comment type="interaction">
    <interactant intactId="EBI-748961">
        <id>O95273</id>
    </interactant>
    <interactant intactId="EBI-618295">
        <id>O00506</id>
        <label>STK25</label>
    </interactant>
    <organismsDiffer>false</organismsDiffer>
    <experiments>3</experiments>
</comment>
<comment type="interaction">
    <interactant intactId="EBI-748961">
        <id>O95273</id>
    </interactant>
    <interactant intactId="EBI-2557644">
        <id>O95926</id>
        <label>SYF2</label>
    </interactant>
    <organismsDiffer>false</organismsDiffer>
    <experiments>3</experiments>
</comment>
<comment type="interaction">
    <interactant intactId="EBI-748961">
        <id>O95273</id>
    </interactant>
    <interactant intactId="EBI-2511314">
        <id>Q15170</id>
        <label>TCEAL1</label>
    </interactant>
    <organismsDiffer>false</organismsDiffer>
    <experiments>3</experiments>
</comment>
<comment type="interaction">
    <interactant intactId="EBI-748961">
        <id>O95273</id>
    </interactant>
    <interactant intactId="EBI-769645">
        <id>P15923-1</id>
        <label>TCF3</label>
    </interactant>
    <organismsDiffer>false</organismsDiffer>
    <experiments>3</experiments>
</comment>
<comment type="interaction">
    <interactant intactId="EBI-748961">
        <id>O95273</id>
    </interactant>
    <interactant intactId="EBI-10176734">
        <id>D3DUQ6</id>
        <label>TEAD4</label>
    </interactant>
    <organismsDiffer>false</organismsDiffer>
    <experiments>3</experiments>
</comment>
<comment type="interaction">
    <interactant intactId="EBI-748961">
        <id>O95273</id>
    </interactant>
    <interactant intactId="EBI-1245626">
        <id>P0C1Z6</id>
        <label>TFPT</label>
    </interactant>
    <organismsDiffer>false</organismsDiffer>
    <experiments>6</experiments>
</comment>
<comment type="interaction">
    <interactant intactId="EBI-748961">
        <id>O95273</id>
    </interactant>
    <interactant intactId="EBI-745404">
        <id>Q9P2Z0</id>
        <label>THAP10</label>
    </interactant>
    <organismsDiffer>false</organismsDiffer>
    <experiments>5</experiments>
</comment>
<comment type="interaction">
    <interactant intactId="EBI-748961">
        <id>O95273</id>
    </interactant>
    <interactant intactId="EBI-741350">
        <id>Q9BT49</id>
        <label>THAP7</label>
    </interactant>
    <organismsDiffer>false</organismsDiffer>
    <experiments>4</experiments>
</comment>
<comment type="interaction">
    <interactant intactId="EBI-748961">
        <id>O95273</id>
    </interactant>
    <interactant intactId="EBI-10171534">
        <id>A0PK00</id>
        <label>TMEM120B</label>
    </interactant>
    <organismsDiffer>false</organismsDiffer>
    <experiments>3</experiments>
</comment>
<comment type="interaction">
    <interactant intactId="EBI-748961">
        <id>O95273</id>
    </interactant>
    <interactant intactId="EBI-3246160">
        <id>Q8IUR0</id>
        <label>TRAPPC5</label>
    </interactant>
    <organismsDiffer>false</organismsDiffer>
    <experiments>8</experiments>
</comment>
<comment type="interaction">
    <interactant intactId="EBI-748961">
        <id>O95273</id>
    </interactant>
    <interactant intactId="EBI-6447954">
        <id>Q5W5X9</id>
        <label>TTC23</label>
    </interactant>
    <organismsDiffer>false</organismsDiffer>
    <experiments>3</experiments>
</comment>
<comment type="interaction">
    <interactant intactId="EBI-748961">
        <id>O95273</id>
    </interactant>
    <interactant intactId="EBI-742060">
        <id>Q8TAI1</id>
        <label>TYMSOS</label>
    </interactant>
    <organismsDiffer>false</organismsDiffer>
    <experiments>3</experiments>
</comment>
<comment type="interaction">
    <interactant intactId="EBI-748961">
        <id>O95273</id>
    </interactant>
    <interactant intactId="EBI-8058160">
        <id>O96014</id>
        <label>WNT11</label>
    </interactant>
    <organismsDiffer>false</organismsDiffer>
    <experiments>3</experiments>
</comment>
<comment type="interaction">
    <interactant intactId="EBI-748961">
        <id>O95273</id>
    </interactant>
    <interactant intactId="EBI-744471">
        <id>O43167</id>
        <label>ZBTB24</label>
    </interactant>
    <organismsDiffer>false</organismsDiffer>
    <experiments>3</experiments>
</comment>
<comment type="interaction">
    <interactant intactId="EBI-748961">
        <id>O95273</id>
    </interactant>
    <interactant intactId="EBI-3439227">
        <id>Q8N5A5</id>
        <label>ZGPAT</label>
    </interactant>
    <organismsDiffer>false</organismsDiffer>
    <experiments>4</experiments>
</comment>
<comment type="interaction">
    <interactant intactId="EBI-748961">
        <id>O95273</id>
    </interactant>
    <interactant intactId="EBI-2555767">
        <id>Q15973</id>
        <label>ZNF124</label>
    </interactant>
    <organismsDiffer>false</organismsDiffer>
    <experiments>3</experiments>
</comment>
<comment type="interaction">
    <interactant intactId="EBI-748961">
        <id>O95273</id>
    </interactant>
    <interactant intactId="EBI-749129">
        <id>P52737</id>
        <label>ZNF136</label>
    </interactant>
    <organismsDiffer>false</organismsDiffer>
    <experiments>5</experiments>
</comment>
<comment type="interaction">
    <interactant intactId="EBI-748961">
        <id>O95273</id>
    </interactant>
    <interactant intactId="EBI-10747670">
        <id>Q12901</id>
        <label>ZNF155</label>
    </interactant>
    <organismsDiffer>false</organismsDiffer>
    <experiments>3</experiments>
</comment>
<comment type="interaction">
    <interactant intactId="EBI-748961">
        <id>O95273</id>
    </interactant>
    <interactant intactId="EBI-10234472">
        <id>Q14929</id>
        <label>ZNF169</label>
    </interactant>
    <organismsDiffer>false</organismsDiffer>
    <experiments>3</experiments>
</comment>
<comment type="interaction">
    <interactant intactId="EBI-748961">
        <id>O95273</id>
    </interactant>
    <interactant intactId="EBI-717634">
        <id>P17024</id>
        <label>ZNF20</label>
    </interactant>
    <organismsDiffer>false</organismsDiffer>
    <experiments>6</experiments>
</comment>
<comment type="interaction">
    <interactant intactId="EBI-748961">
        <id>O95273</id>
    </interactant>
    <interactant intactId="EBI-10322867">
        <id>Q9UK11</id>
        <label>ZNF223</label>
    </interactant>
    <organismsDiffer>false</organismsDiffer>
    <experiments>3</experiments>
</comment>
<comment type="interaction">
    <interactant intactId="EBI-748961">
        <id>O95273</id>
    </interactant>
    <interactant intactId="EBI-1105361">
        <id>Q9UIE0</id>
        <label>ZNF230</label>
    </interactant>
    <organismsDiffer>false</organismsDiffer>
    <experiments>3</experiments>
</comment>
<comment type="interaction">
    <interactant intactId="EBI-748961">
        <id>O95273</id>
    </interactant>
    <interactant intactId="EBI-748965">
        <id>Q9HCZ1</id>
        <label>ZNF334</label>
    </interactant>
    <organismsDiffer>false</organismsDiffer>
    <experiments>4</experiments>
</comment>
<comment type="interaction">
    <interactant intactId="EBI-748961">
        <id>O95273</id>
    </interactant>
    <interactant intactId="EBI-10211248">
        <id>Q53GI3</id>
        <label>ZNF394</label>
    </interactant>
    <organismsDiffer>false</organismsDiffer>
    <experiments>3</experiments>
</comment>
<comment type="interaction">
    <interactant intactId="EBI-748961">
        <id>O95273</id>
    </interactant>
    <interactant intactId="EBI-740727">
        <id>Q8TAU3</id>
        <label>ZNF417</label>
    </interactant>
    <organismsDiffer>false</organismsDiffer>
    <experiments>4</experiments>
</comment>
<comment type="interaction">
    <interactant intactId="EBI-748961">
        <id>O95273</id>
    </interactant>
    <interactant intactId="EBI-747580">
        <id>Q8NDP4</id>
        <label>ZNF439</label>
    </interactant>
    <organismsDiffer>false</organismsDiffer>
    <experiments>3</experiments>
</comment>
<comment type="interaction">
    <interactant intactId="EBI-748961">
        <id>O95273</id>
    </interactant>
    <interactant intactId="EBI-8490675">
        <id>Q8WV37</id>
        <label>ZNF480</label>
    </interactant>
    <organismsDiffer>false</organismsDiffer>
    <experiments>3</experiments>
</comment>
<comment type="interaction">
    <interactant intactId="EBI-748961">
        <id>O95273</id>
    </interactant>
    <interactant intactId="EBI-1105370">
        <id>Q9ULM2</id>
        <label>ZNF490</label>
    </interactant>
    <organismsDiffer>false</organismsDiffer>
    <experiments>3</experiments>
</comment>
<comment type="interaction">
    <interactant intactId="EBI-748961">
        <id>O95273</id>
    </interactant>
    <interactant intactId="EBI-2555731">
        <id>Q9H707</id>
        <label>ZNF552</label>
    </interactant>
    <organismsDiffer>false</organismsDiffer>
    <experiments>3</experiments>
</comment>
<comment type="interaction">
    <interactant intactId="EBI-748961">
        <id>O95273</id>
    </interactant>
    <interactant intactId="EBI-10270752">
        <id>Q8NEP9</id>
        <label>ZNF555</label>
    </interactant>
    <organismsDiffer>false</organismsDiffer>
    <experiments>4</experiments>
</comment>
<comment type="interaction">
    <interactant intactId="EBI-748961">
        <id>O95273</id>
    </interactant>
    <interactant intactId="EBI-10699005">
        <id>Q8N988-2</id>
        <label>ZNF557</label>
    </interactant>
    <organismsDiffer>false</organismsDiffer>
    <experiments>3</experiments>
</comment>
<comment type="interaction">
    <interactant intactId="EBI-748961">
        <id>O95273</id>
    </interactant>
    <interactant intactId="EBI-10273713">
        <id>Q8TBZ8</id>
        <label>ZNF564</label>
    </interactant>
    <organismsDiffer>false</organismsDiffer>
    <experiments>3</experiments>
</comment>
<comment type="interaction">
    <interactant intactId="EBI-748961">
        <id>O95273</id>
    </interactant>
    <interactant intactId="EBI-11955189">
        <id>Q96N58</id>
        <label>ZNF578</label>
    </interactant>
    <organismsDiffer>false</organismsDiffer>
    <experiments>3</experiments>
</comment>
<comment type="interaction">
    <interactant intactId="EBI-748961">
        <id>O95273</id>
    </interactant>
    <interactant intactId="EBI-745520">
        <id>Q9P0T4</id>
        <label>ZNF581</label>
    </interactant>
    <organismsDiffer>false</organismsDiffer>
    <experiments>3</experiments>
</comment>
<comment type="interaction">
    <interactant intactId="EBI-748961">
        <id>O95273</id>
    </interactant>
    <interactant intactId="EBI-2797561">
        <id>Q7L945</id>
        <label>ZNF627</label>
    </interactant>
    <organismsDiffer>false</organismsDiffer>
    <experiments>5</experiments>
</comment>
<comment type="interaction">
    <interactant intactId="EBI-748961">
        <id>O95273</id>
    </interactant>
    <interactant intactId="EBI-745276">
        <id>Q9BS34</id>
        <label>ZNF670</label>
    </interactant>
    <organismsDiffer>false</organismsDiffer>
    <experiments>6</experiments>
</comment>
<comment type="interaction">
    <interactant intactId="EBI-748961">
        <id>O95273</id>
    </interactant>
    <interactant intactId="EBI-11090299">
        <id>Q9H7X3</id>
        <label>ZNF696</label>
    </interactant>
    <organismsDiffer>false</organismsDiffer>
    <experiments>3</experiments>
</comment>
<comment type="interaction">
    <interactant intactId="EBI-748961">
        <id>O95273</id>
    </interactant>
    <interactant intactId="EBI-10265733">
        <id>Q8N508</id>
        <label>ZNF697</label>
    </interactant>
    <organismsDiffer>false</organismsDiffer>
    <experiments>3</experiments>
</comment>
<comment type="interaction">
    <interactant intactId="EBI-748961">
        <id>O95273</id>
    </interactant>
    <interactant intactId="EBI-748111">
        <id>Q96C28</id>
        <label>ZNF707</label>
    </interactant>
    <organismsDiffer>false</organismsDiffer>
    <experiments>7</experiments>
</comment>
<comment type="interaction">
    <interactant intactId="EBI-748961">
        <id>O95273</id>
    </interactant>
    <interactant intactId="EBI-3925400">
        <id>A8K8V0</id>
        <label>ZNF785</label>
    </interactant>
    <organismsDiffer>false</organismsDiffer>
    <experiments>3</experiments>
</comment>
<comment type="interaction">
    <interactant intactId="EBI-748961">
        <id>O95273</id>
    </interactant>
    <interactant intactId="EBI-10265203">
        <id>Q8N393</id>
        <label>ZNF786</label>
    </interactant>
    <organismsDiffer>false</organismsDiffer>
    <experiments>3</experiments>
</comment>
<comment type="interaction">
    <interactant intactId="EBI-748961">
        <id>O95273</id>
    </interactant>
    <interactant intactId="EBI-5667516">
        <id>Q9Y2P0</id>
        <label>ZNF835</label>
    </interactant>
    <organismsDiffer>false</organismsDiffer>
    <experiments>3</experiments>
</comment>
<comment type="interaction">
    <interactant intactId="EBI-748961">
        <id>O95273</id>
    </interactant>
    <interactant intactId="EBI-11962574">
        <id>Q96EG3</id>
        <label>ZNF837</label>
    </interactant>
    <organismsDiffer>false</organismsDiffer>
    <experiments>3</experiments>
</comment>
<comment type="interaction">
    <interactant intactId="EBI-748961">
        <id>O95273</id>
    </interactant>
    <interactant intactId="EBI-3920053">
        <id>Q16670</id>
        <label>ZSCAN26</label>
    </interactant>
    <organismsDiffer>false</organismsDiffer>
    <experiments>3</experiments>
</comment>
<comment type="interaction">
    <interactant intactId="EBI-748961">
        <id>O95273</id>
    </interactant>
    <interactant intactId="EBI-10175366">
        <id>B0FTY2</id>
    </interactant>
    <organismsDiffer>false</organismsDiffer>
    <experiments>3</experiments>
</comment>
<comment type="interaction">
    <interactant intactId="EBI-748961">
        <id>O95273</id>
    </interactant>
    <interactant intactId="EBI-10175477">
        <id>B2R4U6</id>
    </interactant>
    <organismsDiffer>false</organismsDiffer>
    <experiments>3</experiments>
</comment>
<comment type="interaction">
    <interactant intactId="EBI-748961">
        <id>O95273</id>
    </interactant>
    <interactant intactId="EBI-10177680">
        <id>F4ZW62</id>
    </interactant>
    <organismsDiffer>false</organismsDiffer>
    <experiments>3</experiments>
</comment>
<comment type="interaction">
    <interactant intactId="EBI-748961">
        <id>O95273</id>
    </interactant>
    <interactant intactId="EBI-10248413">
        <id>Q5XG85</id>
    </interactant>
    <organismsDiffer>false</organismsDiffer>
    <experiments>3</experiments>
</comment>
<comment type="interaction">
    <interactant intactId="EBI-748961">
        <id>O95273</id>
    </interactant>
    <interactant intactId="EBI-10268244">
        <id>Q8N9J2</id>
    </interactant>
    <organismsDiffer>false</organismsDiffer>
    <experiments>3</experiments>
</comment>
<comment type="interaction">
    <interactant intactId="EBI-748961">
        <id>O95273</id>
    </interactant>
    <interactant intactId="EBI-10282278">
        <id>Q96BA2</id>
    </interactant>
    <organismsDiffer>false</organismsDiffer>
    <experiments>3</experiments>
</comment>
<comment type="interaction">
    <interactant intactId="EBI-748961">
        <id>O95273</id>
    </interactant>
    <interactant intactId="EBI-309315">
        <id>Q60867</id>
        <label>Neurod1</label>
    </interactant>
    <organismsDiffer>true</organismsDiffer>
    <experiments>4</experiments>
</comment>
<comment type="interaction">
    <interactant intactId="EBI-748961">
        <id>O95273</id>
    </interactant>
    <interactant intactId="EBI-25492395">
        <id>PRO_0000449633</id>
        <label>rep</label>
        <dbReference type="UniProtKB" id="P0DTD1"/>
    </interactant>
    <organismsDiffer>true</organismsDiffer>
    <experiments>5</experiments>
</comment>
<comment type="subcellular location">
    <subcellularLocation>
        <location>Cytoplasm</location>
    </subcellularLocation>
    <subcellularLocation>
        <location>Nucleus</location>
    </subcellularLocation>
</comment>
<comment type="alternative products">
    <event type="alternative splicing"/>
    <isoform>
        <id>O95273-1</id>
        <name>1</name>
        <sequence type="displayed"/>
    </isoform>
    <isoform>
        <id>O95273-2</id>
        <name>2</name>
        <sequence type="described" ref="VSP_032014 VSP_032015"/>
    </isoform>
    <isoform>
        <id>O95273-3</id>
        <name>3</name>
        <sequence type="described" ref="VSP_032012"/>
    </isoform>
    <isoform>
        <id>O95273-4</id>
        <name>4</name>
        <sequence type="described" ref="VSP_032012 VSP_032013 VSP_032016"/>
    </isoform>
</comment>
<comment type="tissue specificity">
    <text evidence="1 2 3 5 6">Ubiquitously expressed. Expression is down-regulated in a variety of tumor types including breast, colon, prostate and rectal tumors, and is up-regulated in certain hepatic carcinomas.</text>
</comment>
<comment type="developmental stage">
    <text evidence="2">Expression may increase during differentiation.</text>
</comment>
<comment type="induction">
    <text evidence="6">Expression is induced by sodium butyrate, an inhibitor of colon cancer cell proliferation.</text>
</comment>
<comment type="PTM">
    <text evidence="2">Phosphorylated.</text>
</comment>
<comment type="similarity">
    <text evidence="11">Belongs to the CCNDBP1 family.</text>
</comment>
<comment type="sequence caution" evidence="11">
    <conflict type="frameshift">
        <sequence resource="EMBL-CDS" id="AAD11777"/>
    </conflict>
</comment>
<comment type="sequence caution" evidence="11">
    <conflict type="frameshift">
        <sequence resource="EMBL-CDS" id="AAP97163"/>
    </conflict>
</comment>
<organism>
    <name type="scientific">Homo sapiens</name>
    <name type="common">Human</name>
    <dbReference type="NCBI Taxonomy" id="9606"/>
    <lineage>
        <taxon>Eukaryota</taxon>
        <taxon>Metazoa</taxon>
        <taxon>Chordata</taxon>
        <taxon>Craniata</taxon>
        <taxon>Vertebrata</taxon>
        <taxon>Euteleostomi</taxon>
        <taxon>Mammalia</taxon>
        <taxon>Eutheria</taxon>
        <taxon>Euarchontoglires</taxon>
        <taxon>Primates</taxon>
        <taxon>Haplorrhini</taxon>
        <taxon>Catarrhini</taxon>
        <taxon>Hominidae</taxon>
        <taxon>Homo</taxon>
    </lineage>
</organism>
<sequence>MASATAPAAAVPTLASPLEQLRHLAEELRLLLPRVRVGEAQETTEEFNREMFWRRLNEAAVTVSREATTLTIVFSQLPLPSPQETQKFCEQVHAAIKAFIAVYYLLPKDQGITLRKLVRGATLDIVDGMAQLMEVLSVTPTQSPENNDLISYNSVWVACQQMPQIPRDNKAAALLMLTKNVDFVKDAHEEMEQAVEECDPYSGLLNDTEENNSDNHNHEDDVLGFPSNQDLYWSEDDQELIIPCLALVRASKACLKKIRMLVAENGKKDQVAQLDDIVDISDEISPSVDDLALSIYPPMCHLTVRINSAKLVSVLKKALEITKASHVTPQPEDSWIPLLINAIDHCMNRIKELTQSELEL</sequence>
<accession>O95273</accession>
<accession>A8K3Q0</accession>
<accession>A8K3U2</accession>
<accession>Q6ZQN9</accession>
<accession>Q7Z519</accession>
<accession>Q8NBS7</accession>
<accession>Q8NBY2</accession>
<accession>Q9NS19</accession>
<accession>Q9NYH3</accession>
<accession>Q9UHX9</accession>
<protein>
    <recommendedName>
        <fullName>Cyclin-D1-binding protein 1</fullName>
    </recommendedName>
    <alternativeName>
        <fullName>Grap2 and cyclin-D-interacting protein</fullName>
    </alternativeName>
    <alternativeName>
        <fullName>Human homolog of Maid</fullName>
    </alternativeName>
</protein>
<gene>
    <name type="primary">CCNDBP1</name>
    <name type="synonym">DIP1</name>
    <name type="synonym">GCIP</name>
    <name type="synonym">HHM</name>
</gene>
<name>CCDB1_HUMAN</name>
<dbReference type="EMBL" id="AF082569">
    <property type="protein sequence ID" value="AAD11777.1"/>
    <property type="status" value="ALT_FRAME"/>
    <property type="molecule type" value="mRNA"/>
</dbReference>
<dbReference type="EMBL" id="AF132034">
    <property type="protein sequence ID" value="AAF77613.1"/>
    <property type="molecule type" value="mRNA"/>
</dbReference>
<dbReference type="EMBL" id="AF246144">
    <property type="protein sequence ID" value="AAF67182.1"/>
    <property type="molecule type" value="mRNA"/>
</dbReference>
<dbReference type="EMBL" id="AF087852">
    <property type="protein sequence ID" value="AAP97163.1"/>
    <property type="status" value="ALT_FRAME"/>
    <property type="molecule type" value="mRNA"/>
</dbReference>
<dbReference type="EMBL" id="AF113535">
    <property type="protein sequence ID" value="AAF14872.1"/>
    <property type="molecule type" value="mRNA"/>
</dbReference>
<dbReference type="EMBL" id="CR450331">
    <property type="protein sequence ID" value="CAG29327.1"/>
    <property type="molecule type" value="mRNA"/>
</dbReference>
<dbReference type="EMBL" id="AK075296">
    <property type="protein sequence ID" value="BAC11530.1"/>
    <property type="molecule type" value="mRNA"/>
</dbReference>
<dbReference type="EMBL" id="AK128849">
    <property type="protein sequence ID" value="BAC87645.1"/>
    <property type="molecule type" value="mRNA"/>
</dbReference>
<dbReference type="EMBL" id="AK290665">
    <property type="protein sequence ID" value="BAF83354.1"/>
    <property type="molecule type" value="mRNA"/>
</dbReference>
<dbReference type="EMBL" id="AK290707">
    <property type="protein sequence ID" value="BAF83396.1"/>
    <property type="molecule type" value="mRNA"/>
</dbReference>
<dbReference type="EMBL" id="AK075146">
    <property type="protein sequence ID" value="BAC11433.1"/>
    <property type="molecule type" value="mRNA"/>
</dbReference>
<dbReference type="EMBL" id="CH471125">
    <property type="protein sequence ID" value="EAW92588.1"/>
    <property type="molecule type" value="Genomic_DNA"/>
</dbReference>
<dbReference type="EMBL" id="CH471125">
    <property type="protein sequence ID" value="EAW92590.1"/>
    <property type="molecule type" value="Genomic_DNA"/>
</dbReference>
<dbReference type="EMBL" id="BC009689">
    <property type="protein sequence ID" value="AAH09689.1"/>
    <property type="molecule type" value="mRNA"/>
</dbReference>
<dbReference type="CCDS" id="CCDS10092.1">
    <molecule id="O95273-1"/>
</dbReference>
<dbReference type="RefSeq" id="NP_036274.3">
    <molecule id="O95273-1"/>
    <property type="nucleotide sequence ID" value="NM_012142.4"/>
</dbReference>
<dbReference type="PDB" id="3AY5">
    <property type="method" value="X-ray"/>
    <property type="resolution" value="2.50 A"/>
    <property type="chains" value="A=1-360"/>
</dbReference>
<dbReference type="PDBsum" id="3AY5"/>
<dbReference type="SMR" id="O95273"/>
<dbReference type="BioGRID" id="117117">
    <property type="interactions" value="149"/>
</dbReference>
<dbReference type="FunCoup" id="O95273">
    <property type="interactions" value="2918"/>
</dbReference>
<dbReference type="IntAct" id="O95273">
    <property type="interactions" value="145"/>
</dbReference>
<dbReference type="MINT" id="O95273"/>
<dbReference type="STRING" id="9606.ENSP00000300213"/>
<dbReference type="GlyGen" id="O95273">
    <property type="glycosylation" value="1 site"/>
</dbReference>
<dbReference type="iPTMnet" id="O95273"/>
<dbReference type="MetOSite" id="O95273"/>
<dbReference type="PhosphoSitePlus" id="O95273"/>
<dbReference type="BioMuta" id="CCNDBP1"/>
<dbReference type="jPOST" id="O95273"/>
<dbReference type="MassIVE" id="O95273"/>
<dbReference type="PaxDb" id="9606-ENSP00000300213"/>
<dbReference type="PeptideAtlas" id="O95273"/>
<dbReference type="ProteomicsDB" id="50774">
    <molecule id="O95273-1"/>
</dbReference>
<dbReference type="ProteomicsDB" id="50775">
    <molecule id="O95273-2"/>
</dbReference>
<dbReference type="ProteomicsDB" id="50776">
    <molecule id="O95273-3"/>
</dbReference>
<dbReference type="ProteomicsDB" id="50777">
    <molecule id="O95273-4"/>
</dbReference>
<dbReference type="Pumba" id="O95273"/>
<dbReference type="Antibodypedia" id="23815">
    <property type="antibodies" value="250 antibodies from 29 providers"/>
</dbReference>
<dbReference type="DNASU" id="23582"/>
<dbReference type="Ensembl" id="ENST00000300213.9">
    <molecule id="O95273-1"/>
    <property type="protein sequence ID" value="ENSP00000300213.4"/>
    <property type="gene ID" value="ENSG00000166946.14"/>
</dbReference>
<dbReference type="Ensembl" id="ENST00000565296.5">
    <molecule id="O95273-2"/>
    <property type="protein sequence ID" value="ENSP00000455419.1"/>
    <property type="gene ID" value="ENSG00000166946.14"/>
</dbReference>
<dbReference type="Ensembl" id="ENST00000566515.5">
    <molecule id="O95273-2"/>
    <property type="protein sequence ID" value="ENSP00000456797.1"/>
    <property type="gene ID" value="ENSG00000166946.14"/>
</dbReference>
<dbReference type="GeneID" id="23582"/>
<dbReference type="KEGG" id="hsa:23582"/>
<dbReference type="MANE-Select" id="ENST00000300213.9">
    <property type="protein sequence ID" value="ENSP00000300213.4"/>
    <property type="RefSeq nucleotide sequence ID" value="NM_012142.5"/>
    <property type="RefSeq protein sequence ID" value="NP_036274.3"/>
</dbReference>
<dbReference type="UCSC" id="uc001zqv.4">
    <molecule id="O95273-1"/>
    <property type="organism name" value="human"/>
</dbReference>
<dbReference type="AGR" id="HGNC:1587"/>
<dbReference type="CTD" id="23582"/>
<dbReference type="DisGeNET" id="23582"/>
<dbReference type="GeneCards" id="CCNDBP1"/>
<dbReference type="HGNC" id="HGNC:1587">
    <property type="gene designation" value="CCNDBP1"/>
</dbReference>
<dbReference type="HPA" id="ENSG00000166946">
    <property type="expression patterns" value="Group enriched (bone marrow, brain)"/>
</dbReference>
<dbReference type="MIM" id="607089">
    <property type="type" value="gene"/>
</dbReference>
<dbReference type="neXtProt" id="NX_O95273"/>
<dbReference type="OpenTargets" id="ENSG00000166946"/>
<dbReference type="PharmGKB" id="PA26154"/>
<dbReference type="VEuPathDB" id="HostDB:ENSG00000166946"/>
<dbReference type="eggNOG" id="ENOG502SGCW">
    <property type="taxonomic scope" value="Eukaryota"/>
</dbReference>
<dbReference type="GeneTree" id="ENSGT00390000018016"/>
<dbReference type="HOGENOM" id="CLU_067580_0_0_1"/>
<dbReference type="InParanoid" id="O95273"/>
<dbReference type="OMA" id="HEATKFC"/>
<dbReference type="OrthoDB" id="41588at2759"/>
<dbReference type="PAN-GO" id="O95273">
    <property type="GO annotations" value="1 GO annotation based on evolutionary models"/>
</dbReference>
<dbReference type="PhylomeDB" id="O95273"/>
<dbReference type="TreeFam" id="TF336444"/>
<dbReference type="PathwayCommons" id="O95273"/>
<dbReference type="SignaLink" id="O95273"/>
<dbReference type="BioGRID-ORCS" id="23582">
    <property type="hits" value="25 hits in 1160 CRISPR screens"/>
</dbReference>
<dbReference type="ChiTaRS" id="CCNDBP1">
    <property type="organism name" value="human"/>
</dbReference>
<dbReference type="EvolutionaryTrace" id="O95273"/>
<dbReference type="GeneWiki" id="CCNDBP1"/>
<dbReference type="GenomeRNAi" id="23582"/>
<dbReference type="Pharos" id="O95273">
    <property type="development level" value="Tbio"/>
</dbReference>
<dbReference type="PRO" id="PR:O95273"/>
<dbReference type="Proteomes" id="UP000005640">
    <property type="component" value="Chromosome 15"/>
</dbReference>
<dbReference type="RNAct" id="O95273">
    <property type="molecule type" value="protein"/>
</dbReference>
<dbReference type="Bgee" id="ENSG00000166946">
    <property type="expression patterns" value="Expressed in trabecular bone tissue and 187 other cell types or tissues"/>
</dbReference>
<dbReference type="ExpressionAtlas" id="O95273">
    <property type="expression patterns" value="baseline and differential"/>
</dbReference>
<dbReference type="GO" id="GO:0005737">
    <property type="term" value="C:cytoplasm"/>
    <property type="evidence" value="ECO:0007669"/>
    <property type="project" value="UniProtKB-SubCell"/>
</dbReference>
<dbReference type="GO" id="GO:0016604">
    <property type="term" value="C:nuclear body"/>
    <property type="evidence" value="ECO:0000314"/>
    <property type="project" value="HPA"/>
</dbReference>
<dbReference type="GO" id="GO:0005654">
    <property type="term" value="C:nucleoplasm"/>
    <property type="evidence" value="ECO:0000314"/>
    <property type="project" value="HPA"/>
</dbReference>
<dbReference type="GO" id="GO:0005634">
    <property type="term" value="C:nucleus"/>
    <property type="evidence" value="ECO:0000314"/>
    <property type="project" value="MGI"/>
</dbReference>
<dbReference type="FunFam" id="1.20.1410.10:FF:000005">
    <property type="entry name" value="cyclin-D1-binding protein 1"/>
    <property type="match status" value="1"/>
</dbReference>
<dbReference type="FunFam" id="1.20.1420.10:FF:000008">
    <property type="entry name" value="Cyclin-D1-binding protein 1 homolog"/>
    <property type="match status" value="1"/>
</dbReference>
<dbReference type="Gene3D" id="1.20.1410.10">
    <property type="entry name" value="I/LWEQ domain"/>
    <property type="match status" value="1"/>
</dbReference>
<dbReference type="Gene3D" id="1.20.1420.10">
    <property type="entry name" value="Talin, central domain"/>
    <property type="match status" value="1"/>
</dbReference>
<dbReference type="InterPro" id="IPR026907">
    <property type="entry name" value="GCIP-like"/>
</dbReference>
<dbReference type="InterPro" id="IPR049317">
    <property type="entry name" value="GCIP-like_N"/>
</dbReference>
<dbReference type="InterPro" id="IPR049318">
    <property type="entry name" value="GCIP_C"/>
</dbReference>
<dbReference type="PANTHER" id="PTHR15492">
    <property type="entry name" value="CYCLIN D1-BINDING PROTEIN 1"/>
    <property type="match status" value="1"/>
</dbReference>
<dbReference type="PANTHER" id="PTHR15492:SF4">
    <property type="entry name" value="CYCLIN-D1-BINDING PROTEIN 1"/>
    <property type="match status" value="1"/>
</dbReference>
<dbReference type="Pfam" id="PF20936">
    <property type="entry name" value="GCIP_C"/>
    <property type="match status" value="1"/>
</dbReference>
<dbReference type="Pfam" id="PF13324">
    <property type="entry name" value="GCIP_N"/>
    <property type="match status" value="1"/>
</dbReference>
<evidence type="ECO:0000269" key="1">
    <source>
    </source>
</evidence>
<evidence type="ECO:0000269" key="2">
    <source>
    </source>
</evidence>
<evidence type="ECO:0000269" key="3">
    <source>
    </source>
</evidence>
<evidence type="ECO:0000269" key="4">
    <source>
    </source>
</evidence>
<evidence type="ECO:0000269" key="5">
    <source>
    </source>
</evidence>
<evidence type="ECO:0000269" key="6">
    <source>
    </source>
</evidence>
<evidence type="ECO:0000269" key="7">
    <source>
    </source>
</evidence>
<evidence type="ECO:0000303" key="8">
    <source>
    </source>
</evidence>
<evidence type="ECO:0000303" key="9">
    <source>
    </source>
</evidence>
<evidence type="ECO:0000303" key="10">
    <source>
    </source>
</evidence>
<evidence type="ECO:0000305" key="11"/>
<evidence type="ECO:0007744" key="12">
    <source>
    </source>
</evidence>
<evidence type="ECO:0007829" key="13">
    <source>
        <dbReference type="PDB" id="3AY5"/>
    </source>
</evidence>
<proteinExistence type="evidence at protein level"/>